<name>RL27_SHEPA</name>
<proteinExistence type="inferred from homology"/>
<comment type="similarity">
    <text evidence="1">Belongs to the bacterial ribosomal protein bL27 family.</text>
</comment>
<accession>A8H0U3</accession>
<sequence length="84" mass="9135">MAHKKAGGSTRNGRDSESKRLGVKRFGGESVLAGNIIVRQRGTKFHAGVNVGIGRDHTLFALTDGKVKFEVKGPQNRKFISIED</sequence>
<protein>
    <recommendedName>
        <fullName evidence="1">Large ribosomal subunit protein bL27</fullName>
    </recommendedName>
    <alternativeName>
        <fullName evidence="3">50S ribosomal protein L27</fullName>
    </alternativeName>
</protein>
<reference key="1">
    <citation type="submission" date="2007-10" db="EMBL/GenBank/DDBJ databases">
        <title>Complete sequence of Shewanella pealeana ATCC 700345.</title>
        <authorList>
            <consortium name="US DOE Joint Genome Institute"/>
            <person name="Copeland A."/>
            <person name="Lucas S."/>
            <person name="Lapidus A."/>
            <person name="Barry K."/>
            <person name="Glavina del Rio T."/>
            <person name="Dalin E."/>
            <person name="Tice H."/>
            <person name="Pitluck S."/>
            <person name="Chertkov O."/>
            <person name="Brettin T."/>
            <person name="Bruce D."/>
            <person name="Detter J.C."/>
            <person name="Han C."/>
            <person name="Schmutz J."/>
            <person name="Larimer F."/>
            <person name="Land M."/>
            <person name="Hauser L."/>
            <person name="Kyrpides N."/>
            <person name="Kim E."/>
            <person name="Zhao J.-S.Z."/>
            <person name="Manno D."/>
            <person name="Hawari J."/>
            <person name="Richardson P."/>
        </authorList>
    </citation>
    <scope>NUCLEOTIDE SEQUENCE [LARGE SCALE GENOMIC DNA]</scope>
    <source>
        <strain>ATCC 700345 / ANG-SQ1</strain>
    </source>
</reference>
<gene>
    <name evidence="1" type="primary">rpmA</name>
    <name type="ordered locus">Spea_0853</name>
</gene>
<dbReference type="EMBL" id="CP000851">
    <property type="protein sequence ID" value="ABV86180.1"/>
    <property type="molecule type" value="Genomic_DNA"/>
</dbReference>
<dbReference type="RefSeq" id="WP_012154114.1">
    <property type="nucleotide sequence ID" value="NC_009901.1"/>
</dbReference>
<dbReference type="SMR" id="A8H0U3"/>
<dbReference type="STRING" id="398579.Spea_0853"/>
<dbReference type="KEGG" id="spl:Spea_0853"/>
<dbReference type="eggNOG" id="COG0211">
    <property type="taxonomic scope" value="Bacteria"/>
</dbReference>
<dbReference type="HOGENOM" id="CLU_095424_4_1_6"/>
<dbReference type="OrthoDB" id="9803474at2"/>
<dbReference type="Proteomes" id="UP000002608">
    <property type="component" value="Chromosome"/>
</dbReference>
<dbReference type="GO" id="GO:0022625">
    <property type="term" value="C:cytosolic large ribosomal subunit"/>
    <property type="evidence" value="ECO:0007669"/>
    <property type="project" value="TreeGrafter"/>
</dbReference>
<dbReference type="GO" id="GO:0003735">
    <property type="term" value="F:structural constituent of ribosome"/>
    <property type="evidence" value="ECO:0007669"/>
    <property type="project" value="InterPro"/>
</dbReference>
<dbReference type="GO" id="GO:0006412">
    <property type="term" value="P:translation"/>
    <property type="evidence" value="ECO:0007669"/>
    <property type="project" value="UniProtKB-UniRule"/>
</dbReference>
<dbReference type="FunFam" id="2.40.50.100:FF:000001">
    <property type="entry name" value="50S ribosomal protein L27"/>
    <property type="match status" value="1"/>
</dbReference>
<dbReference type="Gene3D" id="2.40.50.100">
    <property type="match status" value="1"/>
</dbReference>
<dbReference type="HAMAP" id="MF_00539">
    <property type="entry name" value="Ribosomal_bL27"/>
    <property type="match status" value="1"/>
</dbReference>
<dbReference type="InterPro" id="IPR001684">
    <property type="entry name" value="Ribosomal_bL27"/>
</dbReference>
<dbReference type="InterPro" id="IPR018261">
    <property type="entry name" value="Ribosomal_bL27_CS"/>
</dbReference>
<dbReference type="NCBIfam" id="TIGR00062">
    <property type="entry name" value="L27"/>
    <property type="match status" value="1"/>
</dbReference>
<dbReference type="PANTHER" id="PTHR15893:SF0">
    <property type="entry name" value="LARGE RIBOSOMAL SUBUNIT PROTEIN BL27M"/>
    <property type="match status" value="1"/>
</dbReference>
<dbReference type="PANTHER" id="PTHR15893">
    <property type="entry name" value="RIBOSOMAL PROTEIN L27"/>
    <property type="match status" value="1"/>
</dbReference>
<dbReference type="Pfam" id="PF01016">
    <property type="entry name" value="Ribosomal_L27"/>
    <property type="match status" value="1"/>
</dbReference>
<dbReference type="PRINTS" id="PR00063">
    <property type="entry name" value="RIBOSOMALL27"/>
</dbReference>
<dbReference type="SUPFAM" id="SSF110324">
    <property type="entry name" value="Ribosomal L27 protein-like"/>
    <property type="match status" value="1"/>
</dbReference>
<dbReference type="PROSITE" id="PS00831">
    <property type="entry name" value="RIBOSOMAL_L27"/>
    <property type="match status" value="1"/>
</dbReference>
<organism>
    <name type="scientific">Shewanella pealeana (strain ATCC 700345 / ANG-SQ1)</name>
    <dbReference type="NCBI Taxonomy" id="398579"/>
    <lineage>
        <taxon>Bacteria</taxon>
        <taxon>Pseudomonadati</taxon>
        <taxon>Pseudomonadota</taxon>
        <taxon>Gammaproteobacteria</taxon>
        <taxon>Alteromonadales</taxon>
        <taxon>Shewanellaceae</taxon>
        <taxon>Shewanella</taxon>
    </lineage>
</organism>
<keyword id="KW-1185">Reference proteome</keyword>
<keyword id="KW-0687">Ribonucleoprotein</keyword>
<keyword id="KW-0689">Ribosomal protein</keyword>
<feature type="chain" id="PRO_1000081912" description="Large ribosomal subunit protein bL27">
    <location>
        <begin position="1"/>
        <end position="84"/>
    </location>
</feature>
<feature type="region of interest" description="Disordered" evidence="2">
    <location>
        <begin position="1"/>
        <end position="22"/>
    </location>
</feature>
<evidence type="ECO:0000255" key="1">
    <source>
        <dbReference type="HAMAP-Rule" id="MF_00539"/>
    </source>
</evidence>
<evidence type="ECO:0000256" key="2">
    <source>
        <dbReference type="SAM" id="MobiDB-lite"/>
    </source>
</evidence>
<evidence type="ECO:0000305" key="3"/>